<dbReference type="EC" id="4.2.3.3" evidence="1"/>
<dbReference type="EMBL" id="AE017355">
    <property type="protein sequence ID" value="AAT63203.1"/>
    <property type="molecule type" value="Genomic_DNA"/>
</dbReference>
<dbReference type="RefSeq" id="WP_000684755.1">
    <property type="nucleotide sequence ID" value="NC_005957.1"/>
</dbReference>
<dbReference type="RefSeq" id="YP_035749.1">
    <property type="nucleotide sequence ID" value="NC_005957.1"/>
</dbReference>
<dbReference type="SMR" id="Q6HL22"/>
<dbReference type="KEGG" id="btk:BT9727_1415"/>
<dbReference type="PATRIC" id="fig|281309.8.peg.1487"/>
<dbReference type="HOGENOM" id="CLU_120420_1_0_9"/>
<dbReference type="Proteomes" id="UP000001301">
    <property type="component" value="Chromosome"/>
</dbReference>
<dbReference type="GO" id="GO:0005829">
    <property type="term" value="C:cytosol"/>
    <property type="evidence" value="ECO:0007669"/>
    <property type="project" value="TreeGrafter"/>
</dbReference>
<dbReference type="GO" id="GO:0008929">
    <property type="term" value="F:methylglyoxal synthase activity"/>
    <property type="evidence" value="ECO:0007669"/>
    <property type="project" value="UniProtKB-UniRule"/>
</dbReference>
<dbReference type="GO" id="GO:0019242">
    <property type="term" value="P:methylglyoxal biosynthetic process"/>
    <property type="evidence" value="ECO:0007669"/>
    <property type="project" value="UniProtKB-UniRule"/>
</dbReference>
<dbReference type="CDD" id="cd01422">
    <property type="entry name" value="MGS"/>
    <property type="match status" value="1"/>
</dbReference>
<dbReference type="FunFam" id="3.40.50.1380:FF:000006">
    <property type="entry name" value="Methylglyoxal synthase"/>
    <property type="match status" value="1"/>
</dbReference>
<dbReference type="Gene3D" id="3.40.50.1380">
    <property type="entry name" value="Methylglyoxal synthase-like domain"/>
    <property type="match status" value="1"/>
</dbReference>
<dbReference type="HAMAP" id="MF_00549">
    <property type="entry name" value="Methylglyoxal_synth"/>
    <property type="match status" value="1"/>
</dbReference>
<dbReference type="InterPro" id="IPR004363">
    <property type="entry name" value="Methylgl_synth"/>
</dbReference>
<dbReference type="InterPro" id="IPR018148">
    <property type="entry name" value="Methylglyoxal_synth_AS"/>
</dbReference>
<dbReference type="InterPro" id="IPR011607">
    <property type="entry name" value="MGS-like_dom"/>
</dbReference>
<dbReference type="InterPro" id="IPR036914">
    <property type="entry name" value="MGS-like_dom_sf"/>
</dbReference>
<dbReference type="NCBIfam" id="TIGR00160">
    <property type="entry name" value="MGSA"/>
    <property type="match status" value="1"/>
</dbReference>
<dbReference type="NCBIfam" id="NF003559">
    <property type="entry name" value="PRK05234.1"/>
    <property type="match status" value="1"/>
</dbReference>
<dbReference type="PANTHER" id="PTHR30492">
    <property type="entry name" value="METHYLGLYOXAL SYNTHASE"/>
    <property type="match status" value="1"/>
</dbReference>
<dbReference type="PANTHER" id="PTHR30492:SF0">
    <property type="entry name" value="METHYLGLYOXAL SYNTHASE"/>
    <property type="match status" value="1"/>
</dbReference>
<dbReference type="Pfam" id="PF02142">
    <property type="entry name" value="MGS"/>
    <property type="match status" value="1"/>
</dbReference>
<dbReference type="PIRSF" id="PIRSF006614">
    <property type="entry name" value="Methylglyox_syn"/>
    <property type="match status" value="1"/>
</dbReference>
<dbReference type="SMART" id="SM00851">
    <property type="entry name" value="MGS"/>
    <property type="match status" value="1"/>
</dbReference>
<dbReference type="SUPFAM" id="SSF52335">
    <property type="entry name" value="Methylglyoxal synthase-like"/>
    <property type="match status" value="1"/>
</dbReference>
<dbReference type="PROSITE" id="PS01335">
    <property type="entry name" value="METHYLGLYOXAL_SYNTH"/>
    <property type="match status" value="1"/>
</dbReference>
<dbReference type="PROSITE" id="PS51855">
    <property type="entry name" value="MGS"/>
    <property type="match status" value="1"/>
</dbReference>
<gene>
    <name evidence="1" type="primary">mgsA</name>
    <name type="ordered locus">BT9727_1415</name>
</gene>
<protein>
    <recommendedName>
        <fullName evidence="1">Methylglyoxal synthase</fullName>
        <shortName evidence="1">MGS</shortName>
        <ecNumber evidence="1">4.2.3.3</ecNumber>
    </recommendedName>
</protein>
<organism>
    <name type="scientific">Bacillus thuringiensis subsp. konkukian (strain 97-27)</name>
    <dbReference type="NCBI Taxonomy" id="281309"/>
    <lineage>
        <taxon>Bacteria</taxon>
        <taxon>Bacillati</taxon>
        <taxon>Bacillota</taxon>
        <taxon>Bacilli</taxon>
        <taxon>Bacillales</taxon>
        <taxon>Bacillaceae</taxon>
        <taxon>Bacillus</taxon>
        <taxon>Bacillus cereus group</taxon>
    </lineage>
</organism>
<keyword id="KW-0456">Lyase</keyword>
<feature type="chain" id="PRO_0000178611" description="Methylglyoxal synthase">
    <location>
        <begin position="1"/>
        <end position="131"/>
    </location>
</feature>
<feature type="domain" description="MGS-like" evidence="1">
    <location>
        <begin position="1"/>
        <end position="131"/>
    </location>
</feature>
<feature type="active site" description="Proton donor/acceptor" evidence="1">
    <location>
        <position position="60"/>
    </location>
</feature>
<feature type="binding site" evidence="1">
    <location>
        <position position="8"/>
    </location>
    <ligand>
        <name>substrate</name>
    </ligand>
</feature>
<feature type="binding site" evidence="1">
    <location>
        <position position="12"/>
    </location>
    <ligand>
        <name>substrate</name>
    </ligand>
</feature>
<feature type="binding site" evidence="1">
    <location>
        <begin position="34"/>
        <end position="37"/>
    </location>
    <ligand>
        <name>substrate</name>
    </ligand>
</feature>
<feature type="binding site" evidence="1">
    <location>
        <begin position="54"/>
        <end position="55"/>
    </location>
    <ligand>
        <name>substrate</name>
    </ligand>
</feature>
<feature type="binding site" evidence="1">
    <location>
        <position position="87"/>
    </location>
    <ligand>
        <name>substrate</name>
    </ligand>
</feature>
<reference key="1">
    <citation type="journal article" date="2006" name="J. Bacteriol.">
        <title>Pathogenomic sequence analysis of Bacillus cereus and Bacillus thuringiensis isolates closely related to Bacillus anthracis.</title>
        <authorList>
            <person name="Han C.S."/>
            <person name="Xie G."/>
            <person name="Challacombe J.F."/>
            <person name="Altherr M.R."/>
            <person name="Bhotika S.S."/>
            <person name="Bruce D."/>
            <person name="Campbell C.S."/>
            <person name="Campbell M.L."/>
            <person name="Chen J."/>
            <person name="Chertkov O."/>
            <person name="Cleland C."/>
            <person name="Dimitrijevic M."/>
            <person name="Doggett N.A."/>
            <person name="Fawcett J.J."/>
            <person name="Glavina T."/>
            <person name="Goodwin L.A."/>
            <person name="Hill K.K."/>
            <person name="Hitchcock P."/>
            <person name="Jackson P.J."/>
            <person name="Keim P."/>
            <person name="Kewalramani A.R."/>
            <person name="Longmire J."/>
            <person name="Lucas S."/>
            <person name="Malfatti S."/>
            <person name="McMurry K."/>
            <person name="Meincke L.J."/>
            <person name="Misra M."/>
            <person name="Moseman B.L."/>
            <person name="Mundt M."/>
            <person name="Munk A.C."/>
            <person name="Okinaka R.T."/>
            <person name="Parson-Quintana B."/>
            <person name="Reilly L.P."/>
            <person name="Richardson P."/>
            <person name="Robinson D.L."/>
            <person name="Rubin E."/>
            <person name="Saunders E."/>
            <person name="Tapia R."/>
            <person name="Tesmer J.G."/>
            <person name="Thayer N."/>
            <person name="Thompson L.S."/>
            <person name="Tice H."/>
            <person name="Ticknor L.O."/>
            <person name="Wills P.L."/>
            <person name="Brettin T.S."/>
            <person name="Gilna P."/>
        </authorList>
    </citation>
    <scope>NUCLEOTIDE SEQUENCE [LARGE SCALE GENOMIC DNA]</scope>
    <source>
        <strain>97-27</strain>
    </source>
</reference>
<sequence length="131" mass="14686">MKIALIAHDKKKDDMVSFAYAYKPIFEQHELFATGTTGLRIMEATGLVVTRYQSGPLGGDQEIGAMIAKNDLDMVIFFRDPLTAQPHEPDVNALLRLCDVYAIPLATNMASAEMLMHALERGDLDYRKLRK</sequence>
<comment type="function">
    <text evidence="1">Catalyzes the formation of methylglyoxal from dihydroxyacetone phosphate.</text>
</comment>
<comment type="catalytic activity">
    <reaction evidence="1">
        <text>dihydroxyacetone phosphate = methylglyoxal + phosphate</text>
        <dbReference type="Rhea" id="RHEA:17937"/>
        <dbReference type="ChEBI" id="CHEBI:17158"/>
        <dbReference type="ChEBI" id="CHEBI:43474"/>
        <dbReference type="ChEBI" id="CHEBI:57642"/>
        <dbReference type="EC" id="4.2.3.3"/>
    </reaction>
</comment>
<comment type="similarity">
    <text evidence="1">Belongs to the methylglyoxal synthase family.</text>
</comment>
<evidence type="ECO:0000255" key="1">
    <source>
        <dbReference type="HAMAP-Rule" id="MF_00549"/>
    </source>
</evidence>
<proteinExistence type="inferred from homology"/>
<name>MGSA_BACHK</name>
<accession>Q6HL22</accession>